<gene>
    <name type="ORF">DDB_G0268928</name>
</gene>
<dbReference type="EMBL" id="AAFI02000004">
    <property type="protein sequence ID" value="EAL73053.1"/>
    <property type="molecule type" value="Genomic_DNA"/>
</dbReference>
<dbReference type="RefSeq" id="XP_646859.1">
    <property type="nucleotide sequence ID" value="XM_641767.1"/>
</dbReference>
<dbReference type="SMR" id="Q55F11"/>
<dbReference type="PaxDb" id="44689-DDB0232327"/>
<dbReference type="EnsemblProtists" id="EAL73053">
    <property type="protein sequence ID" value="EAL73053"/>
    <property type="gene ID" value="DDB_G0268928"/>
</dbReference>
<dbReference type="GeneID" id="8616542"/>
<dbReference type="KEGG" id="ddi:DDB_G0268928"/>
<dbReference type="dictyBase" id="DDB_G0268928"/>
<dbReference type="VEuPathDB" id="AmoebaDB:DDB_G0268928"/>
<dbReference type="eggNOG" id="ENOG502SU9G">
    <property type="taxonomic scope" value="Eukaryota"/>
</dbReference>
<dbReference type="HOGENOM" id="CLU_494708_0_0_1"/>
<dbReference type="InParanoid" id="Q55F11"/>
<dbReference type="OMA" id="YLRYHYF"/>
<dbReference type="PRO" id="PR:Q55F11"/>
<dbReference type="Proteomes" id="UP000002195">
    <property type="component" value="Chromosome 1"/>
</dbReference>
<dbReference type="GO" id="GO:0000331">
    <property type="term" value="C:contractile vacuole"/>
    <property type="evidence" value="ECO:0000314"/>
    <property type="project" value="dictyBase"/>
</dbReference>
<dbReference type="GO" id="GO:0005794">
    <property type="term" value="C:Golgi apparatus"/>
    <property type="evidence" value="ECO:0000314"/>
    <property type="project" value="dictyBase"/>
</dbReference>
<dbReference type="GO" id="GO:0016020">
    <property type="term" value="C:membrane"/>
    <property type="evidence" value="ECO:0007669"/>
    <property type="project" value="UniProtKB-SubCell"/>
</dbReference>
<dbReference type="GO" id="GO:0045140">
    <property type="term" value="F:inositol phosphoceramide synthase activity"/>
    <property type="evidence" value="ECO:0000314"/>
    <property type="project" value="dictyBase"/>
</dbReference>
<dbReference type="GO" id="GO:0030148">
    <property type="term" value="P:sphingolipid biosynthetic process"/>
    <property type="evidence" value="ECO:0000314"/>
    <property type="project" value="dictyBase"/>
</dbReference>
<dbReference type="FunFam" id="1.20.144.10:FF:000078">
    <property type="entry name" value="PA-phosphatase related-family protein DDB_G0268928"/>
    <property type="match status" value="1"/>
</dbReference>
<dbReference type="Gene3D" id="1.20.144.10">
    <property type="entry name" value="Phosphatidic acid phosphatase type 2/haloperoxidase"/>
    <property type="match status" value="1"/>
</dbReference>
<dbReference type="InterPro" id="IPR026841">
    <property type="entry name" value="Aur1/Ipt1"/>
</dbReference>
<dbReference type="InterPro" id="IPR052185">
    <property type="entry name" value="IPC_Synthase-Related"/>
</dbReference>
<dbReference type="InterPro" id="IPR036938">
    <property type="entry name" value="P_Acid_Pase_2/haloperoxi_sf"/>
</dbReference>
<dbReference type="PANTHER" id="PTHR31310">
    <property type="match status" value="1"/>
</dbReference>
<dbReference type="PANTHER" id="PTHR31310:SF7">
    <property type="entry name" value="PA-PHOSPHATASE RELATED-FAMILY PROTEIN DDB_G0268928"/>
    <property type="match status" value="1"/>
</dbReference>
<dbReference type="Pfam" id="PF14378">
    <property type="entry name" value="PAP2_3"/>
    <property type="match status" value="1"/>
</dbReference>
<dbReference type="SUPFAM" id="SSF48317">
    <property type="entry name" value="Acid phosphatase/Vanadium-dependent haloperoxidase"/>
    <property type="match status" value="1"/>
</dbReference>
<reference key="1">
    <citation type="journal article" date="2005" name="Nature">
        <title>The genome of the social amoeba Dictyostelium discoideum.</title>
        <authorList>
            <person name="Eichinger L."/>
            <person name="Pachebat J.A."/>
            <person name="Gloeckner G."/>
            <person name="Rajandream M.A."/>
            <person name="Sucgang R."/>
            <person name="Berriman M."/>
            <person name="Song J."/>
            <person name="Olsen R."/>
            <person name="Szafranski K."/>
            <person name="Xu Q."/>
            <person name="Tunggal B."/>
            <person name="Kummerfeld S."/>
            <person name="Madera M."/>
            <person name="Konfortov B.A."/>
            <person name="Rivero F."/>
            <person name="Bankier A.T."/>
            <person name="Lehmann R."/>
            <person name="Hamlin N."/>
            <person name="Davies R."/>
            <person name="Gaudet P."/>
            <person name="Fey P."/>
            <person name="Pilcher K."/>
            <person name="Chen G."/>
            <person name="Saunders D."/>
            <person name="Sodergren E.J."/>
            <person name="Davis P."/>
            <person name="Kerhornou A."/>
            <person name="Nie X."/>
            <person name="Hall N."/>
            <person name="Anjard C."/>
            <person name="Hemphill L."/>
            <person name="Bason N."/>
            <person name="Farbrother P."/>
            <person name="Desany B."/>
            <person name="Just E."/>
            <person name="Morio T."/>
            <person name="Rost R."/>
            <person name="Churcher C.M."/>
            <person name="Cooper J."/>
            <person name="Haydock S."/>
            <person name="van Driessche N."/>
            <person name="Cronin A."/>
            <person name="Goodhead I."/>
            <person name="Muzny D.M."/>
            <person name="Mourier T."/>
            <person name="Pain A."/>
            <person name="Lu M."/>
            <person name="Harper D."/>
            <person name="Lindsay R."/>
            <person name="Hauser H."/>
            <person name="James K.D."/>
            <person name="Quiles M."/>
            <person name="Madan Babu M."/>
            <person name="Saito T."/>
            <person name="Buchrieser C."/>
            <person name="Wardroper A."/>
            <person name="Felder M."/>
            <person name="Thangavelu M."/>
            <person name="Johnson D."/>
            <person name="Knights A."/>
            <person name="Loulseged H."/>
            <person name="Mungall K.L."/>
            <person name="Oliver K."/>
            <person name="Price C."/>
            <person name="Quail M.A."/>
            <person name="Urushihara H."/>
            <person name="Hernandez J."/>
            <person name="Rabbinowitsch E."/>
            <person name="Steffen D."/>
            <person name="Sanders M."/>
            <person name="Ma J."/>
            <person name="Kohara Y."/>
            <person name="Sharp S."/>
            <person name="Simmonds M.N."/>
            <person name="Spiegler S."/>
            <person name="Tivey A."/>
            <person name="Sugano S."/>
            <person name="White B."/>
            <person name="Walker D."/>
            <person name="Woodward J.R."/>
            <person name="Winckler T."/>
            <person name="Tanaka Y."/>
            <person name="Shaulsky G."/>
            <person name="Schleicher M."/>
            <person name="Weinstock G.M."/>
            <person name="Rosenthal A."/>
            <person name="Cox E.C."/>
            <person name="Chisholm R.L."/>
            <person name="Gibbs R.A."/>
            <person name="Loomis W.F."/>
            <person name="Platzer M."/>
            <person name="Kay R.R."/>
            <person name="Williams J.G."/>
            <person name="Dear P.H."/>
            <person name="Noegel A.A."/>
            <person name="Barrell B.G."/>
            <person name="Kuspa A."/>
        </authorList>
    </citation>
    <scope>NUCLEOTIDE SEQUENCE [LARGE SCALE GENOMIC DNA]</scope>
    <source>
        <strain>AX4</strain>
    </source>
</reference>
<reference key="2">
    <citation type="journal article" date="2007" name="Microbiology">
        <title>A new environmentally resistant cell type from Dictyostelium.</title>
        <authorList>
            <person name="Serafimidis I."/>
            <person name="Bloomfield G."/>
            <person name="Skelton J."/>
            <person name="Ivens A."/>
            <person name="Kay R.R."/>
        </authorList>
    </citation>
    <scope>IDENTIFICATION</scope>
</reference>
<evidence type="ECO:0000255" key="1"/>
<evidence type="ECO:0000256" key="2">
    <source>
        <dbReference type="SAM" id="MobiDB-lite"/>
    </source>
</evidence>
<evidence type="ECO:0000305" key="3"/>
<proteinExistence type="inferred from homology"/>
<accession>Q55F11</accession>
<protein>
    <recommendedName>
        <fullName>PA-phosphatase related-family protein DDB_G0268928</fullName>
    </recommendedName>
</protein>
<feature type="chain" id="PRO_0000367483" description="PA-phosphatase related-family protein DDB_G0268928">
    <location>
        <begin position="1"/>
        <end position="551"/>
    </location>
</feature>
<feature type="transmembrane region" description="Helical" evidence="1">
    <location>
        <begin position="211"/>
        <end position="231"/>
    </location>
</feature>
<feature type="transmembrane region" description="Helical" evidence="1">
    <location>
        <begin position="232"/>
        <end position="252"/>
    </location>
</feature>
<feature type="transmembrane region" description="Helical" evidence="1">
    <location>
        <begin position="273"/>
        <end position="293"/>
    </location>
</feature>
<feature type="transmembrane region" description="Helical" evidence="1">
    <location>
        <begin position="346"/>
        <end position="366"/>
    </location>
</feature>
<feature type="transmembrane region" description="Helical" evidence="1">
    <location>
        <begin position="393"/>
        <end position="413"/>
    </location>
</feature>
<feature type="transmembrane region" description="Helical" evidence="1">
    <location>
        <begin position="474"/>
        <end position="494"/>
    </location>
</feature>
<feature type="transmembrane region" description="Helical" evidence="1">
    <location>
        <begin position="500"/>
        <end position="520"/>
    </location>
</feature>
<feature type="region of interest" description="Disordered" evidence="2">
    <location>
        <begin position="26"/>
        <end position="50"/>
    </location>
</feature>
<feature type="region of interest" description="Disordered" evidence="2">
    <location>
        <begin position="123"/>
        <end position="172"/>
    </location>
</feature>
<feature type="compositionally biased region" description="Polar residues" evidence="2">
    <location>
        <begin position="26"/>
        <end position="47"/>
    </location>
</feature>
<feature type="compositionally biased region" description="Polar residues" evidence="2">
    <location>
        <begin position="137"/>
        <end position="152"/>
    </location>
</feature>
<feature type="compositionally biased region" description="Low complexity" evidence="2">
    <location>
        <begin position="153"/>
        <end position="171"/>
    </location>
</feature>
<organism>
    <name type="scientific">Dictyostelium discoideum</name>
    <name type="common">Social amoeba</name>
    <dbReference type="NCBI Taxonomy" id="44689"/>
    <lineage>
        <taxon>Eukaryota</taxon>
        <taxon>Amoebozoa</taxon>
        <taxon>Evosea</taxon>
        <taxon>Eumycetozoa</taxon>
        <taxon>Dictyostelia</taxon>
        <taxon>Dictyosteliales</taxon>
        <taxon>Dictyosteliaceae</taxon>
        <taxon>Dictyostelium</taxon>
    </lineage>
</organism>
<sequence length="551" mass="61360">MGVQQQSELPSQTSAKYFSLREDVSTESLSDIDSQTDINNTGNSGKDYSSPPRLSLWGWYTPSQYRGNSSGVTMKNLSASEDSISLSSLDHQQQPMLMVDHSSNSDNEDGATAKDFKIDIHLKGEDEDDGSGDTRVKYNTRNSGTLRNSSNKTQTTVLNNSTTSSNNINNNNDKEINITTLGGSTNSTTKFLYSSVDQSNGSTIRYPYSPSYSDATFSILSGVVILFSIIYSLLVGPIQIMFAFLVSILVFISYICASFAANNRIYLYSITALAVGLGLTIPSFFAATGAVVLGTGRDKSTWDVELFKSDQVLMGWMWPKGQMAIFVDESTIIGPDSFIGKLSTEILQLSYISYYIWGYFMEIYILYNLWRCHLSKDPQQQKMMPIWDQRLKMFICSWISTYFIVFSINLIFPAVSPRVYIGKTLNLYNNTLEGFGFAGFVRSRIDNAAKGSFGSFPSGHIATSFAIGLSSYKILPAYGFVSTIAAILIAIATMYLRYHYFVDFLAALPVTIFCLLYGGFYTPSDFKNVFVNCFYSIKSIFQNILSKFNNK</sequence>
<keyword id="KW-0472">Membrane</keyword>
<keyword id="KW-1185">Reference proteome</keyword>
<keyword id="KW-0812">Transmembrane</keyword>
<keyword id="KW-1133">Transmembrane helix</keyword>
<comment type="subcellular location">
    <subcellularLocation>
        <location evidence="3">Membrane</location>
        <topology evidence="3">Multi-pass membrane protein</topology>
    </subcellularLocation>
</comment>
<comment type="similarity">
    <text evidence="3">Belongs to the PA-phosphatase related phosphoesterase family.</text>
</comment>
<name>Y8928_DICDI</name>